<name>DCYD1_ORYSJ</name>
<feature type="transit peptide" description="Mitochondrion" evidence="3">
    <location>
        <begin position="1"/>
        <end position="63"/>
    </location>
</feature>
<feature type="chain" id="PRO_0000429502" description="D-cysteine desulfhydrase 1, mitochondrial">
    <location>
        <begin position="64"/>
        <end position="426"/>
    </location>
</feature>
<feature type="active site" description="Nucleophile" evidence="2">
    <location>
        <position position="146"/>
    </location>
</feature>
<feature type="modified residue" description="N6-(pyridoxal phosphate)lysine" evidence="2">
    <location>
        <position position="119"/>
    </location>
</feature>
<organism>
    <name type="scientific">Oryza sativa subsp. japonica</name>
    <name type="common">Rice</name>
    <dbReference type="NCBI Taxonomy" id="39947"/>
    <lineage>
        <taxon>Eukaryota</taxon>
        <taxon>Viridiplantae</taxon>
        <taxon>Streptophyta</taxon>
        <taxon>Embryophyta</taxon>
        <taxon>Tracheophyta</taxon>
        <taxon>Spermatophyta</taxon>
        <taxon>Magnoliopsida</taxon>
        <taxon>Liliopsida</taxon>
        <taxon>Poales</taxon>
        <taxon>Poaceae</taxon>
        <taxon>BOP clade</taxon>
        <taxon>Oryzoideae</taxon>
        <taxon>Oryzeae</taxon>
        <taxon>Oryzinae</taxon>
        <taxon>Oryza</taxon>
        <taxon>Oryza sativa</taxon>
    </lineage>
</organism>
<comment type="function">
    <text evidence="4">Catalyzes the production of hydrogen sulfide (H2S) from D-cysteine (D-cys).</text>
</comment>
<comment type="catalytic activity">
    <reaction evidence="4">
        <text>D-cysteine + H2O = hydrogen sulfide + pyruvate + NH4(+) + H(+)</text>
        <dbReference type="Rhea" id="RHEA:11268"/>
        <dbReference type="ChEBI" id="CHEBI:15361"/>
        <dbReference type="ChEBI" id="CHEBI:15377"/>
        <dbReference type="ChEBI" id="CHEBI:15378"/>
        <dbReference type="ChEBI" id="CHEBI:28938"/>
        <dbReference type="ChEBI" id="CHEBI:29919"/>
        <dbReference type="ChEBI" id="CHEBI:35236"/>
        <dbReference type="EC" id="4.4.1.15"/>
    </reaction>
</comment>
<comment type="cofactor">
    <cofactor evidence="1">
        <name>pyridoxal 5'-phosphate</name>
        <dbReference type="ChEBI" id="CHEBI:597326"/>
    </cofactor>
</comment>
<comment type="activity regulation">
    <text evidence="4">Inhibited by L-cysteine (L-cys).</text>
</comment>
<comment type="biophysicochemical properties">
    <kinetics>
        <KM evidence="4">136 uM for D-cysteine</KM>
        <Vmax evidence="4">45.5 umol/min/mg enzyme with D-cysteine as substrate</Vmax>
    </kinetics>
    <phDependence>
        <text evidence="4">Optimum pH is 7.5. Stable at pH 5.5-7.5.</text>
    </phDependence>
    <temperatureDependence>
        <text evidence="4">Optimum temperature is 40 degrees Celsius.</text>
    </temperatureDependence>
</comment>
<comment type="subunit">
    <text evidence="4">Homodimer.</text>
</comment>
<comment type="subcellular location">
    <subcellularLocation>
        <location evidence="1">Mitochondrion</location>
    </subcellularLocation>
</comment>
<comment type="tissue specificity">
    <text evidence="4">Present in seeds (at protein level).</text>
</comment>
<comment type="miscellaneous">
    <text evidence="5">The D-cysteine (D-cys) level in seeds depends on the variety, partly as a result of DCD1 activity.</text>
</comment>
<comment type="similarity">
    <text evidence="6">Belongs to the ACC deaminase/D-cysteine desulfhydrase family.</text>
</comment>
<comment type="sequence caution" evidence="6">
    <conflict type="erroneous initiation">
        <sequence resource="EMBL-CDS" id="BAD16875"/>
    </conflict>
    <text>Truncated N-terminus.</text>
</comment>
<comment type="sequence caution" evidence="6">
    <conflict type="erroneous initiation">
        <sequence resource="EMBL-CDS" id="BAF10181"/>
    </conflict>
    <text>Truncated N-terminus.</text>
</comment>
<comment type="sequence caution" evidence="6">
    <conflict type="erroneous initiation">
        <sequence resource="EMBL-CDS" id="EEE57887"/>
    </conflict>
    <text>Truncated N-terminus.</text>
</comment>
<protein>
    <recommendedName>
        <fullName evidence="5">D-cysteine desulfhydrase 1, mitochondrial</fullName>
        <shortName evidence="5">OsDCD1</shortName>
        <ecNumber evidence="4">4.4.1.15</ecNumber>
    </recommendedName>
    <alternativeName>
        <fullName evidence="5">OsD-CDes1</fullName>
        <shortName evidence="5">D-CDes1</shortName>
    </alternativeName>
</protein>
<sequence length="426" mass="45494">MARGAHQAPGGFWTVAAAPTRCSLPHSLPIPLHAAAAAAAWMAGVSAASAAGKIGSFLSKRPYAPPSWASHLSPAPSQTFSLGHFPTPIHKWNLPNLPNGTEVWIKRDDISGMQLSGNKVRKLEFLMADAVAQGADCVITVGGIQSNHCRATAVAAKYINLDCYLILRTSKLLVDKDPGLVGNLLVERLVGAHIDLVSKEEYGKIGSVALADLLKKKLLEEGRKPYVIPVGGSNSLGTWGYIEAIREIEHQIQISGDVQFDDIVVACGSGGTIAGLALGSKLSSLKAKVHAFSVCDDPGYFHSYVQDLIDGLHSDLRSHDLVNIENAKGLGYAMNTAEELKFVKDIATATGIVLDPVYSGKAAYGMLKDMGANPAKWEGRKILFVHTGGLLGLYDKVDELSSLSGSWRRMDLEESVPRKDGTGKMF</sequence>
<reference key="1">
    <citation type="journal article" date="2005" name="Nature">
        <title>The map-based sequence of the rice genome.</title>
        <authorList>
            <consortium name="International rice genome sequencing project (IRGSP)"/>
        </authorList>
    </citation>
    <scope>NUCLEOTIDE SEQUENCE [LARGE SCALE GENOMIC DNA]</scope>
    <source>
        <strain>cv. Nipponbare</strain>
    </source>
</reference>
<reference key="2">
    <citation type="journal article" date="2008" name="Nucleic Acids Res.">
        <title>The rice annotation project database (RAP-DB): 2008 update.</title>
        <authorList>
            <consortium name="The rice annotation project (RAP)"/>
        </authorList>
    </citation>
    <scope>GENOME REANNOTATION</scope>
    <source>
        <strain>cv. Nipponbare</strain>
    </source>
</reference>
<reference key="3">
    <citation type="journal article" date="2013" name="Rice">
        <title>Improvement of the Oryza sativa Nipponbare reference genome using next generation sequence and optical map data.</title>
        <authorList>
            <person name="Kawahara Y."/>
            <person name="de la Bastide M."/>
            <person name="Hamilton J.P."/>
            <person name="Kanamori H."/>
            <person name="McCombie W.R."/>
            <person name="Ouyang S."/>
            <person name="Schwartz D.C."/>
            <person name="Tanaka T."/>
            <person name="Wu J."/>
            <person name="Zhou S."/>
            <person name="Childs K.L."/>
            <person name="Davidson R.M."/>
            <person name="Lin H."/>
            <person name="Quesada-Ocampo L."/>
            <person name="Vaillancourt B."/>
            <person name="Sakai H."/>
            <person name="Lee S.S."/>
            <person name="Kim J."/>
            <person name="Numa H."/>
            <person name="Itoh T."/>
            <person name="Buell C.R."/>
            <person name="Matsumoto T."/>
        </authorList>
    </citation>
    <scope>GENOME REANNOTATION</scope>
    <source>
        <strain>cv. Nipponbare</strain>
    </source>
</reference>
<reference key="4">
    <citation type="journal article" date="2005" name="PLoS Biol.">
        <title>The genomes of Oryza sativa: a history of duplications.</title>
        <authorList>
            <person name="Yu J."/>
            <person name="Wang J."/>
            <person name="Lin W."/>
            <person name="Li S."/>
            <person name="Li H."/>
            <person name="Zhou J."/>
            <person name="Ni P."/>
            <person name="Dong W."/>
            <person name="Hu S."/>
            <person name="Zeng C."/>
            <person name="Zhang J."/>
            <person name="Zhang Y."/>
            <person name="Li R."/>
            <person name="Xu Z."/>
            <person name="Li S."/>
            <person name="Li X."/>
            <person name="Zheng H."/>
            <person name="Cong L."/>
            <person name="Lin L."/>
            <person name="Yin J."/>
            <person name="Geng J."/>
            <person name="Li G."/>
            <person name="Shi J."/>
            <person name="Liu J."/>
            <person name="Lv H."/>
            <person name="Li J."/>
            <person name="Wang J."/>
            <person name="Deng Y."/>
            <person name="Ran L."/>
            <person name="Shi X."/>
            <person name="Wang X."/>
            <person name="Wu Q."/>
            <person name="Li C."/>
            <person name="Ren X."/>
            <person name="Wang J."/>
            <person name="Wang X."/>
            <person name="Li D."/>
            <person name="Liu D."/>
            <person name="Zhang X."/>
            <person name="Ji Z."/>
            <person name="Zhao W."/>
            <person name="Sun Y."/>
            <person name="Zhang Z."/>
            <person name="Bao J."/>
            <person name="Han Y."/>
            <person name="Dong L."/>
            <person name="Ji J."/>
            <person name="Chen P."/>
            <person name="Wu S."/>
            <person name="Liu J."/>
            <person name="Xiao Y."/>
            <person name="Bu D."/>
            <person name="Tan J."/>
            <person name="Yang L."/>
            <person name="Ye C."/>
            <person name="Zhang J."/>
            <person name="Xu J."/>
            <person name="Zhou Y."/>
            <person name="Yu Y."/>
            <person name="Zhang B."/>
            <person name="Zhuang S."/>
            <person name="Wei H."/>
            <person name="Liu B."/>
            <person name="Lei M."/>
            <person name="Yu H."/>
            <person name="Li Y."/>
            <person name="Xu H."/>
            <person name="Wei S."/>
            <person name="He X."/>
            <person name="Fang L."/>
            <person name="Zhang Z."/>
            <person name="Zhang Y."/>
            <person name="Huang X."/>
            <person name="Su Z."/>
            <person name="Tong W."/>
            <person name="Li J."/>
            <person name="Tong Z."/>
            <person name="Li S."/>
            <person name="Ye J."/>
            <person name="Wang L."/>
            <person name="Fang L."/>
            <person name="Lei T."/>
            <person name="Chen C.-S."/>
            <person name="Chen H.-C."/>
            <person name="Xu Z."/>
            <person name="Li H."/>
            <person name="Huang H."/>
            <person name="Zhang F."/>
            <person name="Xu H."/>
            <person name="Li N."/>
            <person name="Zhao C."/>
            <person name="Li S."/>
            <person name="Dong L."/>
            <person name="Huang Y."/>
            <person name="Li L."/>
            <person name="Xi Y."/>
            <person name="Qi Q."/>
            <person name="Li W."/>
            <person name="Zhang B."/>
            <person name="Hu W."/>
            <person name="Zhang Y."/>
            <person name="Tian X."/>
            <person name="Jiao Y."/>
            <person name="Liang X."/>
            <person name="Jin J."/>
            <person name="Gao L."/>
            <person name="Zheng W."/>
            <person name="Hao B."/>
            <person name="Liu S.-M."/>
            <person name="Wang W."/>
            <person name="Yuan L."/>
            <person name="Cao M."/>
            <person name="McDermott J."/>
            <person name="Samudrala R."/>
            <person name="Wang J."/>
            <person name="Wong G.K.-S."/>
            <person name="Yang H."/>
        </authorList>
    </citation>
    <scope>NUCLEOTIDE SEQUENCE [LARGE SCALE GENOMIC DNA]</scope>
    <source>
        <strain>cv. Nipponbare</strain>
    </source>
</reference>
<reference key="5">
    <citation type="journal article" date="2003" name="Science">
        <title>Collection, mapping, and annotation of over 28,000 cDNA clones from japonica rice.</title>
        <authorList>
            <consortium name="The rice full-length cDNA consortium"/>
        </authorList>
    </citation>
    <scope>NUCLEOTIDE SEQUENCE [LARGE SCALE MRNA] OF 11-426</scope>
    <source>
        <strain>cv. Nipponbare</strain>
    </source>
</reference>
<reference key="6">
    <citation type="journal article" date="2023" name="Protein Expr. Purif.">
        <title>Identification, characterization, and application of a d-cysteine desulfhydrase from rice seed (Oryza sativa L.).</title>
        <authorList>
            <person name="Yamasawa R."/>
            <person name="Saito H."/>
            <person name="Yashima Y."/>
            <person name="Ito H."/>
            <person name="Hamada S."/>
        </authorList>
    </citation>
    <scope>FUNCTION</scope>
    <scope>CATALYTIC ACTIVITY</scope>
    <scope>TISSUE SPECIFICITY</scope>
    <scope>HOMODIMERIZATION</scope>
    <scope>BIOPHYSICOCHEMICAL PROPERTIES</scope>
    <scope>ACTIVITY REGULATION</scope>
    <source>
        <strain>cv. Koganemochi</strain>
        <strain>cv. Tsugaruroman</strain>
        <strain>cv. Yumetoiro</strain>
        <tissue>Seed</tissue>
    </source>
</reference>
<keyword id="KW-0456">Lyase</keyword>
<keyword id="KW-0496">Mitochondrion</keyword>
<keyword id="KW-0663">Pyridoxal phosphate</keyword>
<keyword id="KW-1185">Reference proteome</keyword>
<keyword id="KW-0809">Transit peptide</keyword>
<evidence type="ECO:0000250" key="1">
    <source>
        <dbReference type="UniProtKB" id="F4HYF3"/>
    </source>
</evidence>
<evidence type="ECO:0000250" key="2">
    <source>
        <dbReference type="UniProtKB" id="Q7M523"/>
    </source>
</evidence>
<evidence type="ECO:0000255" key="3"/>
<evidence type="ECO:0000269" key="4">
    <source>
    </source>
</evidence>
<evidence type="ECO:0000303" key="5">
    <source>
    </source>
</evidence>
<evidence type="ECO:0000305" key="6"/>
<evidence type="ECO:0000312" key="7">
    <source>
        <dbReference type="EMBL" id="BAD16875.1"/>
    </source>
</evidence>
<evidence type="ECO:0000312" key="8">
    <source>
        <dbReference type="EMBL" id="EEE57887.1"/>
    </source>
</evidence>
<accession>Q6ZHE5</accession>
<dbReference type="EC" id="4.4.1.15" evidence="4"/>
<dbReference type="EMBL" id="AP004068">
    <property type="protein sequence ID" value="BAD16875.1"/>
    <property type="status" value="ALT_INIT"/>
    <property type="molecule type" value="Genomic_DNA"/>
</dbReference>
<dbReference type="EMBL" id="AP008208">
    <property type="protein sequence ID" value="BAF10181.1"/>
    <property type="status" value="ALT_INIT"/>
    <property type="molecule type" value="Genomic_DNA"/>
</dbReference>
<dbReference type="EMBL" id="AP014958">
    <property type="status" value="NOT_ANNOTATED_CDS"/>
    <property type="molecule type" value="Genomic_DNA"/>
</dbReference>
<dbReference type="EMBL" id="CM000139">
    <property type="protein sequence ID" value="EEE57887.1"/>
    <property type="status" value="ALT_INIT"/>
    <property type="molecule type" value="Genomic_DNA"/>
</dbReference>
<dbReference type="EMBL" id="AK071811">
    <property type="status" value="NOT_ANNOTATED_CDS"/>
    <property type="molecule type" value="mRNA"/>
</dbReference>
<dbReference type="RefSeq" id="NP_001403858.1">
    <property type="nucleotide sequence ID" value="NM_001416929.1"/>
</dbReference>
<dbReference type="RefSeq" id="XP_015626189.1">
    <property type="nucleotide sequence ID" value="XM_015770703.1"/>
</dbReference>
<dbReference type="SMR" id="Q6ZHE5"/>
<dbReference type="FunCoup" id="Q6ZHE5">
    <property type="interactions" value="563"/>
</dbReference>
<dbReference type="STRING" id="39947.Q6ZHE5"/>
<dbReference type="PaxDb" id="39947-Q6ZHE5"/>
<dbReference type="GeneID" id="4330881"/>
<dbReference type="KEGG" id="dosa:Os02g0773300"/>
<dbReference type="eggNOG" id="ENOG502QPS1">
    <property type="taxonomic scope" value="Eukaryota"/>
</dbReference>
<dbReference type="HOGENOM" id="CLU_048897_1_1_1"/>
<dbReference type="InParanoid" id="Q6ZHE5"/>
<dbReference type="OrthoDB" id="10266364at2759"/>
<dbReference type="Proteomes" id="UP000000763">
    <property type="component" value="Chromosome 2"/>
</dbReference>
<dbReference type="Proteomes" id="UP000007752">
    <property type="component" value="Chromosome 2"/>
</dbReference>
<dbReference type="Proteomes" id="UP000059680">
    <property type="component" value="Chromosome 2"/>
</dbReference>
<dbReference type="GO" id="GO:0005739">
    <property type="term" value="C:mitochondrion"/>
    <property type="evidence" value="ECO:0007669"/>
    <property type="project" value="UniProtKB-SubCell"/>
</dbReference>
<dbReference type="GO" id="GO:0019148">
    <property type="term" value="F:D-cysteine desulfhydrase activity"/>
    <property type="evidence" value="ECO:0000314"/>
    <property type="project" value="UniProtKB"/>
</dbReference>
<dbReference type="GO" id="GO:0042802">
    <property type="term" value="F:identical protein binding"/>
    <property type="evidence" value="ECO:0000314"/>
    <property type="project" value="UniProtKB"/>
</dbReference>
<dbReference type="GO" id="GO:0042803">
    <property type="term" value="F:protein homodimerization activity"/>
    <property type="evidence" value="ECO:0000314"/>
    <property type="project" value="UniProtKB"/>
</dbReference>
<dbReference type="FunFam" id="3.40.50.1100:FF:000042">
    <property type="entry name" value="Bifunctional D-cysteine desulfhydrase/1-aminocyclopropane-1-carboxylate deaminase mitochondrial"/>
    <property type="match status" value="1"/>
</dbReference>
<dbReference type="FunFam" id="3.40.50.1100:FF:000037">
    <property type="entry name" value="Bifunctional D-cysteine desulfhydrase/1-aminocyclopropane-1-carboxylate deaminase, mitochondrial"/>
    <property type="match status" value="1"/>
</dbReference>
<dbReference type="Gene3D" id="3.40.50.1100">
    <property type="match status" value="2"/>
</dbReference>
<dbReference type="InterPro" id="IPR027278">
    <property type="entry name" value="ACCD_DCysDesulf"/>
</dbReference>
<dbReference type="InterPro" id="IPR005966">
    <property type="entry name" value="D-Cys_desShydrase"/>
</dbReference>
<dbReference type="InterPro" id="IPR001926">
    <property type="entry name" value="TrpB-like_PALP"/>
</dbReference>
<dbReference type="InterPro" id="IPR036052">
    <property type="entry name" value="TrpB-like_PALP_sf"/>
</dbReference>
<dbReference type="NCBIfam" id="TIGR01275">
    <property type="entry name" value="ACC_deam_rel"/>
    <property type="match status" value="1"/>
</dbReference>
<dbReference type="PANTHER" id="PTHR43780">
    <property type="entry name" value="1-AMINOCYCLOPROPANE-1-CARBOXYLATE DEAMINASE-RELATED"/>
    <property type="match status" value="1"/>
</dbReference>
<dbReference type="PANTHER" id="PTHR43780:SF2">
    <property type="entry name" value="1-AMINOCYCLOPROPANE-1-CARBOXYLATE DEAMINASE-RELATED"/>
    <property type="match status" value="1"/>
</dbReference>
<dbReference type="Pfam" id="PF00291">
    <property type="entry name" value="PALP"/>
    <property type="match status" value="1"/>
</dbReference>
<dbReference type="SUPFAM" id="SSF53686">
    <property type="entry name" value="Tryptophan synthase beta subunit-like PLP-dependent enzymes"/>
    <property type="match status" value="1"/>
</dbReference>
<proteinExistence type="evidence at protein level"/>
<gene>
    <name evidence="5" type="primary">DCD1</name>
    <name evidence="6" type="ordered locus">Os02g0773300</name>
    <name evidence="6" type="ordered locus">LOC_Os02g53330</name>
    <name evidence="7" type="ORF">OJ1611_C08.26</name>
    <name evidence="8" type="ORF">OsJ_08555</name>
</gene>